<dbReference type="EC" id="2.8.1.14" evidence="2"/>
<dbReference type="EMBL" id="AY062123">
    <property type="protein sequence ID" value="AAL38183.1"/>
    <property type="molecule type" value="mRNA"/>
</dbReference>
<dbReference type="EMBL" id="AF448221">
    <property type="protein sequence ID" value="AAL35970.1"/>
    <property type="molecule type" value="Genomic_DNA"/>
</dbReference>
<dbReference type="EMBL" id="AB178028">
    <property type="protein sequence ID" value="BAD66875.1"/>
    <property type="molecule type" value="mRNA"/>
</dbReference>
<dbReference type="EMBL" id="CR456445">
    <property type="protein sequence ID" value="CAG30331.1"/>
    <property type="molecule type" value="mRNA"/>
</dbReference>
<dbReference type="EMBL" id="AK001002">
    <property type="protein sequence ID" value="BAA91462.1"/>
    <property type="molecule type" value="mRNA"/>
</dbReference>
<dbReference type="EMBL" id="AK290712">
    <property type="protein sequence ID" value="BAF83401.1"/>
    <property type="molecule type" value="mRNA"/>
</dbReference>
<dbReference type="EMBL" id="AL031588">
    <property type="status" value="NOT_ANNOTATED_CDS"/>
    <property type="molecule type" value="Genomic_DNA"/>
</dbReference>
<dbReference type="EMBL" id="CH471138">
    <property type="protein sequence ID" value="EAW73422.1"/>
    <property type="molecule type" value="Genomic_DNA"/>
</dbReference>
<dbReference type="EMBL" id="CH471138">
    <property type="protein sequence ID" value="EAW73426.1"/>
    <property type="molecule type" value="Genomic_DNA"/>
</dbReference>
<dbReference type="EMBL" id="BC027991">
    <property type="protein sequence ID" value="AAH27991.1"/>
    <property type="molecule type" value="mRNA"/>
</dbReference>
<dbReference type="EMBL" id="BC080631">
    <property type="protein sequence ID" value="AAH80631.1"/>
    <property type="molecule type" value="mRNA"/>
</dbReference>
<dbReference type="CCDS" id="CCDS14075.1">
    <molecule id="O75648-1"/>
</dbReference>
<dbReference type="CCDS" id="CCDS63510.1">
    <molecule id="O75648-2"/>
</dbReference>
<dbReference type="RefSeq" id="NP_001269712.1">
    <property type="nucleotide sequence ID" value="NM_001282783.1"/>
</dbReference>
<dbReference type="RefSeq" id="NP_001269713.1">
    <property type="nucleotide sequence ID" value="NM_001282784.1"/>
</dbReference>
<dbReference type="RefSeq" id="NP_001269714.1">
    <molecule id="O75648-2"/>
    <property type="nucleotide sequence ID" value="NM_001282785.2"/>
</dbReference>
<dbReference type="RefSeq" id="NP_060476.2">
    <molecule id="O75648-1"/>
    <property type="nucleotide sequence ID" value="NM_018006.4"/>
</dbReference>
<dbReference type="SMR" id="O75648"/>
<dbReference type="BioGRID" id="120814">
    <property type="interactions" value="109"/>
</dbReference>
<dbReference type="FunCoup" id="O75648">
    <property type="interactions" value="1315"/>
</dbReference>
<dbReference type="IntAct" id="O75648">
    <property type="interactions" value="81"/>
</dbReference>
<dbReference type="STRING" id="9606.ENSP00000496496"/>
<dbReference type="iPTMnet" id="O75648"/>
<dbReference type="PhosphoSitePlus" id="O75648"/>
<dbReference type="SwissPalm" id="O75648"/>
<dbReference type="BioMuta" id="TRMU"/>
<dbReference type="jPOST" id="O75648"/>
<dbReference type="MassIVE" id="O75648"/>
<dbReference type="PaxDb" id="9606-ENSP00000290846"/>
<dbReference type="PeptideAtlas" id="O75648"/>
<dbReference type="ProteomicsDB" id="50138">
    <molecule id="O75648-1"/>
</dbReference>
<dbReference type="ProteomicsDB" id="50139">
    <molecule id="O75648-2"/>
</dbReference>
<dbReference type="ProteomicsDB" id="50140">
    <molecule id="O75648-3"/>
</dbReference>
<dbReference type="ProteomicsDB" id="50141">
    <molecule id="O75648-4"/>
</dbReference>
<dbReference type="ProteomicsDB" id="50142">
    <molecule id="O75648-5"/>
</dbReference>
<dbReference type="Pumba" id="O75648"/>
<dbReference type="Antibodypedia" id="28061">
    <property type="antibodies" value="190 antibodies from 18 providers"/>
</dbReference>
<dbReference type="DNASU" id="55687"/>
<dbReference type="Ensembl" id="ENST00000381019.3">
    <molecule id="O75648-2"/>
    <property type="protein sequence ID" value="ENSP00000370407.3"/>
    <property type="gene ID" value="ENSG00000100416.15"/>
</dbReference>
<dbReference type="Ensembl" id="ENST00000457572.5">
    <molecule id="O75648-5"/>
    <property type="protein sequence ID" value="ENSP00000407700.1"/>
    <property type="gene ID" value="ENSG00000100416.15"/>
</dbReference>
<dbReference type="Ensembl" id="ENST00000645190.1">
    <molecule id="O75648-1"/>
    <property type="protein sequence ID" value="ENSP00000496496.1"/>
    <property type="gene ID" value="ENSG00000100416.15"/>
</dbReference>
<dbReference type="GeneID" id="55687"/>
<dbReference type="KEGG" id="hsa:55687"/>
<dbReference type="MANE-Select" id="ENST00000645190.1">
    <property type="protein sequence ID" value="ENSP00000496496.1"/>
    <property type="RefSeq nucleotide sequence ID" value="NM_018006.5"/>
    <property type="RefSeq protein sequence ID" value="NP_060476.2"/>
</dbReference>
<dbReference type="UCSC" id="uc003bhp.4">
    <molecule id="O75648-1"/>
    <property type="organism name" value="human"/>
</dbReference>
<dbReference type="AGR" id="HGNC:25481"/>
<dbReference type="CTD" id="55687"/>
<dbReference type="DisGeNET" id="55687"/>
<dbReference type="GeneCards" id="TRMU"/>
<dbReference type="GeneReviews" id="TRMU"/>
<dbReference type="HGNC" id="HGNC:25481">
    <property type="gene designation" value="TRMU"/>
</dbReference>
<dbReference type="HPA" id="ENSG00000100416">
    <property type="expression patterns" value="Low tissue specificity"/>
</dbReference>
<dbReference type="MalaCards" id="TRMU"/>
<dbReference type="MIM" id="580000">
    <property type="type" value="phenotype"/>
</dbReference>
<dbReference type="MIM" id="610230">
    <property type="type" value="gene"/>
</dbReference>
<dbReference type="MIM" id="613070">
    <property type="type" value="phenotype"/>
</dbReference>
<dbReference type="neXtProt" id="NX_O75648"/>
<dbReference type="OpenTargets" id="ENSG00000100416"/>
<dbReference type="Orphanet" id="217371">
    <property type="disease" value="Acute infantile liver failure due to synthesis defect of mtDNA-encoded proteins"/>
</dbReference>
<dbReference type="Orphanet" id="254864">
    <property type="disease" value="Mitochondrial myopathy with reversible cytochrome C oxidase deficiency"/>
</dbReference>
<dbReference type="Orphanet" id="90641">
    <property type="disease" value="Rare mitochondrial non-syndromic sensorineural deafness"/>
</dbReference>
<dbReference type="PharmGKB" id="PA142670701"/>
<dbReference type="VEuPathDB" id="HostDB:ENSG00000100416"/>
<dbReference type="eggNOG" id="KOG2805">
    <property type="taxonomic scope" value="Eukaryota"/>
</dbReference>
<dbReference type="GeneTree" id="ENSGT00390000014323"/>
<dbReference type="HOGENOM" id="CLU_035188_1_1_1"/>
<dbReference type="InParanoid" id="O75648"/>
<dbReference type="OMA" id="PFYVWDL"/>
<dbReference type="OrthoDB" id="3685at2759"/>
<dbReference type="PAN-GO" id="O75648">
    <property type="GO annotations" value="2 GO annotations based on evolutionary models"/>
</dbReference>
<dbReference type="PhylomeDB" id="O75648"/>
<dbReference type="TreeFam" id="TF105611"/>
<dbReference type="BioCyc" id="MetaCyc:ENSG00000100416-MONOMER"/>
<dbReference type="BRENDA" id="2.1.1.61">
    <property type="organism ID" value="2681"/>
</dbReference>
<dbReference type="PathwayCommons" id="O75648"/>
<dbReference type="Reactome" id="R-HSA-6787450">
    <property type="pathway name" value="tRNA modification in the mitochondrion"/>
</dbReference>
<dbReference type="SignaLink" id="O75648"/>
<dbReference type="BioGRID-ORCS" id="55687">
    <property type="hits" value="25 hits in 1160 CRISPR screens"/>
</dbReference>
<dbReference type="ChiTaRS" id="TRMU">
    <property type="organism name" value="human"/>
</dbReference>
<dbReference type="GeneWiki" id="TRMU"/>
<dbReference type="GenomeRNAi" id="55687"/>
<dbReference type="Pharos" id="O75648">
    <property type="development level" value="Tbio"/>
</dbReference>
<dbReference type="PRO" id="PR:O75648"/>
<dbReference type="Proteomes" id="UP000005640">
    <property type="component" value="Chromosome 22"/>
</dbReference>
<dbReference type="RNAct" id="O75648">
    <property type="molecule type" value="protein"/>
</dbReference>
<dbReference type="Bgee" id="ENSG00000100416">
    <property type="expression patterns" value="Expressed in apex of heart and 178 other cell types or tissues"/>
</dbReference>
<dbReference type="ExpressionAtlas" id="O75648">
    <property type="expression patterns" value="baseline and differential"/>
</dbReference>
<dbReference type="GO" id="GO:0005739">
    <property type="term" value="C:mitochondrion"/>
    <property type="evidence" value="ECO:0000314"/>
    <property type="project" value="HPA"/>
</dbReference>
<dbReference type="GO" id="GO:0005524">
    <property type="term" value="F:ATP binding"/>
    <property type="evidence" value="ECO:0007669"/>
    <property type="project" value="UniProtKB-KW"/>
</dbReference>
<dbReference type="GO" id="GO:0000049">
    <property type="term" value="F:tRNA binding"/>
    <property type="evidence" value="ECO:0007669"/>
    <property type="project" value="UniProtKB-KW"/>
</dbReference>
<dbReference type="GO" id="GO:0061708">
    <property type="term" value="F:tRNA-5-taurinomethyluridine 2-sulfurtransferase"/>
    <property type="evidence" value="ECO:0007669"/>
    <property type="project" value="UniProtKB-EC"/>
</dbReference>
<dbReference type="GO" id="GO:0002143">
    <property type="term" value="P:tRNA wobble position uridine thiolation"/>
    <property type="evidence" value="ECO:0000318"/>
    <property type="project" value="GO_Central"/>
</dbReference>
<dbReference type="CDD" id="cd01998">
    <property type="entry name" value="MnmA_TRMU-like"/>
    <property type="match status" value="1"/>
</dbReference>
<dbReference type="FunFam" id="2.40.30.10:FF:000057">
    <property type="entry name" value="Mitochondrial tRNA-specific 2-thiouridylase 1"/>
    <property type="match status" value="1"/>
</dbReference>
<dbReference type="FunFam" id="3.40.50.620:FF:000104">
    <property type="entry name" value="Mitochondrial tRNA-specific 2-thiouridylase 1"/>
    <property type="match status" value="1"/>
</dbReference>
<dbReference type="FunFam" id="2.30.30.280:FF:000001">
    <property type="entry name" value="tRNA-specific 2-thiouridylase MnmA"/>
    <property type="match status" value="1"/>
</dbReference>
<dbReference type="Gene3D" id="2.30.30.280">
    <property type="entry name" value="Adenine nucleotide alpha hydrolases-like domains"/>
    <property type="match status" value="1"/>
</dbReference>
<dbReference type="Gene3D" id="3.40.50.620">
    <property type="entry name" value="HUPs"/>
    <property type="match status" value="1"/>
</dbReference>
<dbReference type="Gene3D" id="2.40.30.10">
    <property type="entry name" value="Translation factors"/>
    <property type="match status" value="1"/>
</dbReference>
<dbReference type="HAMAP" id="MF_00144">
    <property type="entry name" value="tRNA_thiouridyl_MnmA"/>
    <property type="match status" value="1"/>
</dbReference>
<dbReference type="InterPro" id="IPR004506">
    <property type="entry name" value="MnmA-like"/>
</dbReference>
<dbReference type="InterPro" id="IPR046885">
    <property type="entry name" value="MnmA-like_C"/>
</dbReference>
<dbReference type="InterPro" id="IPR046884">
    <property type="entry name" value="MnmA-like_central"/>
</dbReference>
<dbReference type="InterPro" id="IPR023382">
    <property type="entry name" value="MnmA-like_central_sf"/>
</dbReference>
<dbReference type="InterPro" id="IPR014729">
    <property type="entry name" value="Rossmann-like_a/b/a_fold"/>
</dbReference>
<dbReference type="NCBIfam" id="NF001138">
    <property type="entry name" value="PRK00143.1"/>
    <property type="match status" value="1"/>
</dbReference>
<dbReference type="NCBIfam" id="TIGR00420">
    <property type="entry name" value="trmU"/>
    <property type="match status" value="1"/>
</dbReference>
<dbReference type="PANTHER" id="PTHR11933:SF5">
    <property type="entry name" value="MITOCHONDRIAL TRNA-SPECIFIC 2-THIOURIDYLASE 1"/>
    <property type="match status" value="1"/>
</dbReference>
<dbReference type="PANTHER" id="PTHR11933">
    <property type="entry name" value="TRNA 5-METHYLAMINOMETHYL-2-THIOURIDYLATE -METHYLTRANSFERASE"/>
    <property type="match status" value="1"/>
</dbReference>
<dbReference type="Pfam" id="PF03054">
    <property type="entry name" value="tRNA_Me_trans"/>
    <property type="match status" value="1"/>
</dbReference>
<dbReference type="Pfam" id="PF20258">
    <property type="entry name" value="tRNA_Me_trans_C"/>
    <property type="match status" value="1"/>
</dbReference>
<dbReference type="Pfam" id="PF20259">
    <property type="entry name" value="tRNA_Me_trans_M"/>
    <property type="match status" value="1"/>
</dbReference>
<dbReference type="SUPFAM" id="SSF52402">
    <property type="entry name" value="Adenine nucleotide alpha hydrolases-like"/>
    <property type="match status" value="1"/>
</dbReference>
<accession>O75648</accession>
<accession>A8K3U7</accession>
<accession>Q05C99</accession>
<accession>Q5W9C8</accession>
<accession>Q66K31</accession>
<accession>Q6ICC3</accession>
<accession>Q9NWC1</accession>
<name>MTU1_HUMAN</name>
<gene>
    <name type="primary">TRMU</name>
    <name type="synonym">MTU1</name>
    <name type="synonym">TRMT1</name>
</gene>
<feature type="chain" id="PRO_0000121708" description="Mitochondrial tRNA-specific 2-thiouridylase 1">
    <location>
        <begin position="1"/>
        <end position="421"/>
    </location>
</feature>
<feature type="region of interest" description="Interaction with target base in tRNA" evidence="1">
    <location>
        <begin position="96"/>
        <end position="98"/>
    </location>
</feature>
<feature type="region of interest" description="Interaction with tRNA" evidence="1">
    <location>
        <begin position="171"/>
        <end position="173"/>
    </location>
</feature>
<feature type="region of interest" description="Interaction with tRNA" evidence="1">
    <location>
        <begin position="334"/>
        <end position="335"/>
    </location>
</feature>
<feature type="region of interest" description="Disordered" evidence="3">
    <location>
        <begin position="395"/>
        <end position="421"/>
    </location>
</feature>
<feature type="active site" description="Nucleophile" evidence="1">
    <location>
        <position position="101"/>
    </location>
</feature>
<feature type="active site" description="Cysteine persulfide intermediate" evidence="1">
    <location>
        <position position="222"/>
    </location>
</feature>
<feature type="binding site" evidence="1">
    <location>
        <begin position="10"/>
        <end position="17"/>
    </location>
    <ligand>
        <name>ATP</name>
        <dbReference type="ChEBI" id="CHEBI:30616"/>
    </ligand>
</feature>
<feature type="binding site" evidence="1">
    <location>
        <position position="36"/>
    </location>
    <ligand>
        <name>ATP</name>
        <dbReference type="ChEBI" id="CHEBI:30616"/>
    </ligand>
</feature>
<feature type="binding site" evidence="1">
    <location>
        <position position="126"/>
    </location>
    <ligand>
        <name>ATP</name>
        <dbReference type="ChEBI" id="CHEBI:30616"/>
    </ligand>
</feature>
<feature type="site" description="Interaction with tRNA" evidence="1">
    <location>
        <position position="127"/>
    </location>
</feature>
<feature type="site" description="Interaction with tRNA" evidence="1">
    <location>
        <position position="267"/>
    </location>
</feature>
<feature type="site" description="Interaction with tRNA" evidence="1">
    <location>
        <position position="367"/>
    </location>
</feature>
<feature type="disulfide bond" evidence="1">
    <location>
        <begin position="101"/>
        <end position="222"/>
    </location>
</feature>
<feature type="splice variant" id="VSP_035391" description="In isoform 3 and isoform 4." evidence="12">
    <location>
        <begin position="1"/>
        <end position="154"/>
    </location>
</feature>
<feature type="splice variant" id="VSP_035392" description="In isoform 3 and isoform 4." evidence="12">
    <original>FEVRNAVKLLQAADSFKDQTFFLSQ</original>
    <variation>MKKSLSRSTLRSPKGFSEIGLKLEM</variation>
    <location>
        <begin position="155"/>
        <end position="179"/>
    </location>
</feature>
<feature type="splice variant" id="VSP_035393" description="In isoform 5." evidence="10">
    <original>VKLLQA</original>
    <variation>RFPRMP</variation>
    <location>
        <begin position="161"/>
        <end position="166"/>
    </location>
</feature>
<feature type="splice variant" id="VSP_035394" description="In isoform 5." evidence="10">
    <location>
        <begin position="167"/>
        <end position="421"/>
    </location>
</feature>
<feature type="splice variant" id="VSP_035395" description="In isoform 2 and isoform 3." evidence="11 12">
    <original>PCVLTLNQDGTVWVTAVQAVRALATGQFAVFYKGDECLGSGKILRLGPSAYTLQKGQRRAGMATESPSDSPEDGPGLSPLL</original>
    <variation>CCVLQGGRVPGQREDPAAGAVCLHAPEGPAQSWDGH</variation>
    <location>
        <begin position="341"/>
        <end position="421"/>
    </location>
</feature>
<feature type="sequence variant" id="VAR_027268" description="Acts as a disease modifier in patients with aminoglycoside-induced deafness and a mutation in mitochondrial 12S rRNA; affects tRNA processing by decreasing thiolation and increasing aminoacylation of tRNAs; the mutant has lower thermal stability than wild-type; does not affect import in the mitochondria; dbSNP:rs11090865." evidence="7 8 9">
    <original>A</original>
    <variation>S</variation>
    <location>
        <position position="10"/>
    </location>
</feature>
<feature type="sequence variant" id="VAR_063428" description="In dbSNP:rs751248771." evidence="8">
    <original>G</original>
    <variation>S</variation>
    <location>
        <position position="14"/>
    </location>
</feature>
<feature type="sequence variant" id="VAR_046380" description="In dbSNP:rs2272938.">
    <original>R</original>
    <variation>S</variation>
    <location>
        <position position="25"/>
    </location>
</feature>
<feature type="sequence variant" id="VAR_063429" description="In LFIT; dbSNP:rs118203990." evidence="8">
    <original>Y</original>
    <variation>H</variation>
    <location>
        <position position="77"/>
    </location>
</feature>
<feature type="sequence variant" id="VAR_046381" description="In dbSNP:rs34012206.">
    <original>E</original>
    <variation>K</variation>
    <location>
        <position position="148"/>
    </location>
</feature>
<feature type="sequence variant" id="VAR_063430" description="In LFIT; dbSNP:rs118203991." evidence="8">
    <original>G</original>
    <variation>D</variation>
    <location>
        <position position="272"/>
    </location>
</feature>
<feature type="sequence variant" id="VAR_063431" description="In dbSNP:rs387907022." evidence="8">
    <original>V</original>
    <variation>M</variation>
    <location>
        <position position="279"/>
    </location>
</feature>
<feature type="sequence variant" id="VAR_046382" description="In dbSNP:rs34152016.">
    <original>R</original>
    <variation>C</variation>
    <location>
        <position position="398"/>
    </location>
</feature>
<feature type="mutagenesis site" description="Loss of activity." evidence="4">
    <original>D</original>
    <variation>A</variation>
    <location>
        <position position="16"/>
    </location>
</feature>
<feature type="sequence conflict" description="In Ref. 4; BAA91462." evidence="13" ref="4">
    <original>F</original>
    <variation>L</variation>
    <location>
        <position position="139"/>
    </location>
</feature>
<feature type="sequence conflict" description="In Ref. 7; AAH80631." evidence="13" ref="7">
    <original>K</original>
    <variation>N</variation>
    <location sequence="O75648-3">
        <position position="14"/>
    </location>
</feature>
<sequence>MQALRHVVCALSGGVDSAVAALLLRRRGYQVTGVFMKNWDSLDEHGVCTADKDCEDAYRVCQILDIPFHQVSYVKEYWNDVFSDFLNEYEKGRTPNPDIVCNKHIKFSCFFHYAVDNLGADAIATGHYARTSLEDEEVFEQKHVKKPEGLFRNRFEVRNAVKLLQAADSFKDQTFFLSQVSQDALRRTIFPLGGLTKEFVKKIAAENRLHHVLQKKESMGMCFIGKRNFEHFLLQYLQPRPGHFISIEDNKVLGTHKGWFLYTLGQRANIGGLREPWYVVEKDSVKGDVFVAPRTDHPALYRDLLRTSRVHWIAEEPPAALVRDKMMECHFRFRHQMALVPCVLTLNQDGTVWVTAVQAVRALATGQFAVFYKGDECLGSGKILRLGPSAYTLQKGQRRAGMATESPSDSPEDGPGLSPLL</sequence>
<organism>
    <name type="scientific">Homo sapiens</name>
    <name type="common">Human</name>
    <dbReference type="NCBI Taxonomy" id="9606"/>
    <lineage>
        <taxon>Eukaryota</taxon>
        <taxon>Metazoa</taxon>
        <taxon>Chordata</taxon>
        <taxon>Craniata</taxon>
        <taxon>Vertebrata</taxon>
        <taxon>Euteleostomi</taxon>
        <taxon>Mammalia</taxon>
        <taxon>Eutheria</taxon>
        <taxon>Euarchontoglires</taxon>
        <taxon>Primates</taxon>
        <taxon>Haplorrhini</taxon>
        <taxon>Catarrhini</taxon>
        <taxon>Hominidae</taxon>
        <taxon>Homo</taxon>
    </lineage>
</organism>
<reference key="1">
    <citation type="journal article" date="2006" name="Biochem. Biophys. Res. Commun.">
        <title>Human TRMU encoding the mitochondrial 5-methylaminomethyl-2-methyltransferase is a putative nuclear modifier gene for the phenotypic expression of the deafness-associated 12S rRNA mutations.</title>
        <authorList>
            <person name="Yan Q."/>
            <person name="Bykhovskaya Y."/>
            <person name="Li R."/>
            <person name="Mengesha E."/>
            <person name="Shohat M."/>
            <person name="Estivill X."/>
            <person name="Fischel-Ghodsian N."/>
            <person name="Guan M.-X."/>
        </authorList>
    </citation>
    <scope>NUCLEOTIDE SEQUENCE [GENOMIC DNA / MRNA] (ISOFORM 1)</scope>
    <scope>SUBCELLULAR LOCATION</scope>
    <scope>TISSUE SPECIFICITY</scope>
</reference>
<reference key="2">
    <citation type="journal article" date="2005" name="J. Biol. Chem.">
        <title>Mitochondria-specific RNA-modifying enzymes responsible for the biosynthesis of the wobble base in mitochondrial tRNAs. Implications for the molecular pathogenesis of human mitochondrial diseases.</title>
        <authorList>
            <person name="Umeda N."/>
            <person name="Suzuki T."/>
            <person name="Yukawa M."/>
            <person name="Ohya Y."/>
            <person name="Shindo H."/>
            <person name="Watanabe K."/>
            <person name="Suzuki T."/>
        </authorList>
    </citation>
    <scope>NUCLEOTIDE SEQUENCE [MRNA] (ISOFORM 1)</scope>
    <scope>FUNCTION</scope>
    <scope>SUBCELLULAR LOCATION</scope>
    <scope>MUTAGENESIS OF ASP-16</scope>
</reference>
<reference key="3">
    <citation type="journal article" date="2004" name="Genome Biol.">
        <title>A genome annotation-driven approach to cloning the human ORFeome.</title>
        <authorList>
            <person name="Collins J.E."/>
            <person name="Wright C.L."/>
            <person name="Edwards C.A."/>
            <person name="Davis M.P."/>
            <person name="Grinham J.A."/>
            <person name="Cole C.G."/>
            <person name="Goward M.E."/>
            <person name="Aguado B."/>
            <person name="Mallya M."/>
            <person name="Mokrab Y."/>
            <person name="Huckle E.J."/>
            <person name="Beare D.M."/>
            <person name="Dunham I."/>
        </authorList>
    </citation>
    <scope>NUCLEOTIDE SEQUENCE [LARGE SCALE MRNA] (ISOFORM 2)</scope>
</reference>
<reference key="4">
    <citation type="journal article" date="2004" name="Nat. Genet.">
        <title>Complete sequencing and characterization of 21,243 full-length human cDNAs.</title>
        <authorList>
            <person name="Ota T."/>
            <person name="Suzuki Y."/>
            <person name="Nishikawa T."/>
            <person name="Otsuki T."/>
            <person name="Sugiyama T."/>
            <person name="Irie R."/>
            <person name="Wakamatsu A."/>
            <person name="Hayashi K."/>
            <person name="Sato H."/>
            <person name="Nagai K."/>
            <person name="Kimura K."/>
            <person name="Makita H."/>
            <person name="Sekine M."/>
            <person name="Obayashi M."/>
            <person name="Nishi T."/>
            <person name="Shibahara T."/>
            <person name="Tanaka T."/>
            <person name="Ishii S."/>
            <person name="Yamamoto J."/>
            <person name="Saito K."/>
            <person name="Kawai Y."/>
            <person name="Isono Y."/>
            <person name="Nakamura Y."/>
            <person name="Nagahari K."/>
            <person name="Murakami K."/>
            <person name="Yasuda T."/>
            <person name="Iwayanagi T."/>
            <person name="Wagatsuma M."/>
            <person name="Shiratori A."/>
            <person name="Sudo H."/>
            <person name="Hosoiri T."/>
            <person name="Kaku Y."/>
            <person name="Kodaira H."/>
            <person name="Kondo H."/>
            <person name="Sugawara M."/>
            <person name="Takahashi M."/>
            <person name="Kanda K."/>
            <person name="Yokoi T."/>
            <person name="Furuya T."/>
            <person name="Kikkawa E."/>
            <person name="Omura Y."/>
            <person name="Abe K."/>
            <person name="Kamihara K."/>
            <person name="Katsuta N."/>
            <person name="Sato K."/>
            <person name="Tanikawa M."/>
            <person name="Yamazaki M."/>
            <person name="Ninomiya K."/>
            <person name="Ishibashi T."/>
            <person name="Yamashita H."/>
            <person name="Murakawa K."/>
            <person name="Fujimori K."/>
            <person name="Tanai H."/>
            <person name="Kimata M."/>
            <person name="Watanabe M."/>
            <person name="Hiraoka S."/>
            <person name="Chiba Y."/>
            <person name="Ishida S."/>
            <person name="Ono Y."/>
            <person name="Takiguchi S."/>
            <person name="Watanabe S."/>
            <person name="Yosida M."/>
            <person name="Hotuta T."/>
            <person name="Kusano J."/>
            <person name="Kanehori K."/>
            <person name="Takahashi-Fujii A."/>
            <person name="Hara H."/>
            <person name="Tanase T.-O."/>
            <person name="Nomura Y."/>
            <person name="Togiya S."/>
            <person name="Komai F."/>
            <person name="Hara R."/>
            <person name="Takeuchi K."/>
            <person name="Arita M."/>
            <person name="Imose N."/>
            <person name="Musashino K."/>
            <person name="Yuuki H."/>
            <person name="Oshima A."/>
            <person name="Sasaki N."/>
            <person name="Aotsuka S."/>
            <person name="Yoshikawa Y."/>
            <person name="Matsunawa H."/>
            <person name="Ichihara T."/>
            <person name="Shiohata N."/>
            <person name="Sano S."/>
            <person name="Moriya S."/>
            <person name="Momiyama H."/>
            <person name="Satoh N."/>
            <person name="Takami S."/>
            <person name="Terashima Y."/>
            <person name="Suzuki O."/>
            <person name="Nakagawa S."/>
            <person name="Senoh A."/>
            <person name="Mizoguchi H."/>
            <person name="Goto Y."/>
            <person name="Shimizu F."/>
            <person name="Wakebe H."/>
            <person name="Hishigaki H."/>
            <person name="Watanabe T."/>
            <person name="Sugiyama A."/>
            <person name="Takemoto M."/>
            <person name="Kawakami B."/>
            <person name="Yamazaki M."/>
            <person name="Watanabe K."/>
            <person name="Kumagai A."/>
            <person name="Itakura S."/>
            <person name="Fukuzumi Y."/>
            <person name="Fujimori Y."/>
            <person name="Komiyama M."/>
            <person name="Tashiro H."/>
            <person name="Tanigami A."/>
            <person name="Fujiwara T."/>
            <person name="Ono T."/>
            <person name="Yamada K."/>
            <person name="Fujii Y."/>
            <person name="Ozaki K."/>
            <person name="Hirao M."/>
            <person name="Ohmori Y."/>
            <person name="Kawabata A."/>
            <person name="Hikiji T."/>
            <person name="Kobatake N."/>
            <person name="Inagaki H."/>
            <person name="Ikema Y."/>
            <person name="Okamoto S."/>
            <person name="Okitani R."/>
            <person name="Kawakami T."/>
            <person name="Noguchi S."/>
            <person name="Itoh T."/>
            <person name="Shigeta K."/>
            <person name="Senba T."/>
            <person name="Matsumura K."/>
            <person name="Nakajima Y."/>
            <person name="Mizuno T."/>
            <person name="Morinaga M."/>
            <person name="Sasaki M."/>
            <person name="Togashi T."/>
            <person name="Oyama M."/>
            <person name="Hata H."/>
            <person name="Watanabe M."/>
            <person name="Komatsu T."/>
            <person name="Mizushima-Sugano J."/>
            <person name="Satoh T."/>
            <person name="Shirai Y."/>
            <person name="Takahashi Y."/>
            <person name="Nakagawa K."/>
            <person name="Okumura K."/>
            <person name="Nagase T."/>
            <person name="Nomura N."/>
            <person name="Kikuchi H."/>
            <person name="Masuho Y."/>
            <person name="Yamashita R."/>
            <person name="Nakai K."/>
            <person name="Yada T."/>
            <person name="Nakamura Y."/>
            <person name="Ohara O."/>
            <person name="Isogai T."/>
            <person name="Sugano S."/>
        </authorList>
    </citation>
    <scope>NUCLEOTIDE SEQUENCE [LARGE SCALE MRNA] (ISOFORMS 1 AND 5)</scope>
    <source>
        <tissue>Embryo</tissue>
        <tissue>Lung</tissue>
    </source>
</reference>
<reference key="5">
    <citation type="journal article" date="1999" name="Nature">
        <title>The DNA sequence of human chromosome 22.</title>
        <authorList>
            <person name="Dunham I."/>
            <person name="Hunt A.R."/>
            <person name="Collins J.E."/>
            <person name="Bruskiewich R."/>
            <person name="Beare D.M."/>
            <person name="Clamp M."/>
            <person name="Smink L.J."/>
            <person name="Ainscough R."/>
            <person name="Almeida J.P."/>
            <person name="Babbage A.K."/>
            <person name="Bagguley C."/>
            <person name="Bailey J."/>
            <person name="Barlow K.F."/>
            <person name="Bates K.N."/>
            <person name="Beasley O.P."/>
            <person name="Bird C.P."/>
            <person name="Blakey S.E."/>
            <person name="Bridgeman A.M."/>
            <person name="Buck D."/>
            <person name="Burgess J."/>
            <person name="Burrill W.D."/>
            <person name="Burton J."/>
            <person name="Carder C."/>
            <person name="Carter N.P."/>
            <person name="Chen Y."/>
            <person name="Clark G."/>
            <person name="Clegg S.M."/>
            <person name="Cobley V.E."/>
            <person name="Cole C.G."/>
            <person name="Collier R.E."/>
            <person name="Connor R."/>
            <person name="Conroy D."/>
            <person name="Corby N.R."/>
            <person name="Coville G.J."/>
            <person name="Cox A.V."/>
            <person name="Davis J."/>
            <person name="Dawson E."/>
            <person name="Dhami P.D."/>
            <person name="Dockree C."/>
            <person name="Dodsworth S.J."/>
            <person name="Durbin R.M."/>
            <person name="Ellington A.G."/>
            <person name="Evans K.L."/>
            <person name="Fey J.M."/>
            <person name="Fleming K."/>
            <person name="French L."/>
            <person name="Garner A.A."/>
            <person name="Gilbert J.G.R."/>
            <person name="Goward M.E."/>
            <person name="Grafham D.V."/>
            <person name="Griffiths M.N.D."/>
            <person name="Hall C."/>
            <person name="Hall R.E."/>
            <person name="Hall-Tamlyn G."/>
            <person name="Heathcott R.W."/>
            <person name="Ho S."/>
            <person name="Holmes S."/>
            <person name="Hunt S.E."/>
            <person name="Jones M.C."/>
            <person name="Kershaw J."/>
            <person name="Kimberley A.M."/>
            <person name="King A."/>
            <person name="Laird G.K."/>
            <person name="Langford C.F."/>
            <person name="Leversha M.A."/>
            <person name="Lloyd C."/>
            <person name="Lloyd D.M."/>
            <person name="Martyn I.D."/>
            <person name="Mashreghi-Mohammadi M."/>
            <person name="Matthews L.H."/>
            <person name="Mccann O.T."/>
            <person name="Mcclay J."/>
            <person name="Mclaren S."/>
            <person name="McMurray A.A."/>
            <person name="Milne S.A."/>
            <person name="Mortimore B.J."/>
            <person name="Odell C.N."/>
            <person name="Pavitt R."/>
            <person name="Pearce A.V."/>
            <person name="Pearson D."/>
            <person name="Phillimore B.J.C.T."/>
            <person name="Phillips S.H."/>
            <person name="Plumb R.W."/>
            <person name="Ramsay H."/>
            <person name="Ramsey Y."/>
            <person name="Rogers L."/>
            <person name="Ross M.T."/>
            <person name="Scott C.E."/>
            <person name="Sehra H.K."/>
            <person name="Skuce C.D."/>
            <person name="Smalley S."/>
            <person name="Smith M.L."/>
            <person name="Soderlund C."/>
            <person name="Spragon L."/>
            <person name="Steward C.A."/>
            <person name="Sulston J.E."/>
            <person name="Swann R.M."/>
            <person name="Vaudin M."/>
            <person name="Wall M."/>
            <person name="Wallis J.M."/>
            <person name="Whiteley M.N."/>
            <person name="Willey D.L."/>
            <person name="Williams L."/>
            <person name="Williams S.A."/>
            <person name="Williamson H."/>
            <person name="Wilmer T.E."/>
            <person name="Wilming L."/>
            <person name="Wright C.L."/>
            <person name="Hubbard T."/>
            <person name="Bentley D.R."/>
            <person name="Beck S."/>
            <person name="Rogers J."/>
            <person name="Shimizu N."/>
            <person name="Minoshima S."/>
            <person name="Kawasaki K."/>
            <person name="Sasaki T."/>
            <person name="Asakawa S."/>
            <person name="Kudoh J."/>
            <person name="Shintani A."/>
            <person name="Shibuya K."/>
            <person name="Yoshizaki Y."/>
            <person name="Aoki N."/>
            <person name="Mitsuyama S."/>
            <person name="Roe B.A."/>
            <person name="Chen F."/>
            <person name="Chu L."/>
            <person name="Crabtree J."/>
            <person name="Deschamps S."/>
            <person name="Do A."/>
            <person name="Do T."/>
            <person name="Dorman A."/>
            <person name="Fang F."/>
            <person name="Fu Y."/>
            <person name="Hu P."/>
            <person name="Hua A."/>
            <person name="Kenton S."/>
            <person name="Lai H."/>
            <person name="Lao H.I."/>
            <person name="Lewis J."/>
            <person name="Lewis S."/>
            <person name="Lin S.-P."/>
            <person name="Loh P."/>
            <person name="Malaj E."/>
            <person name="Nguyen T."/>
            <person name="Pan H."/>
            <person name="Phan S."/>
            <person name="Qi S."/>
            <person name="Qian Y."/>
            <person name="Ray L."/>
            <person name="Ren Q."/>
            <person name="Shaull S."/>
            <person name="Sloan D."/>
            <person name="Song L."/>
            <person name="Wang Q."/>
            <person name="Wang Y."/>
            <person name="Wang Z."/>
            <person name="White J."/>
            <person name="Willingham D."/>
            <person name="Wu H."/>
            <person name="Yao Z."/>
            <person name="Zhan M."/>
            <person name="Zhang G."/>
            <person name="Chissoe S."/>
            <person name="Murray J."/>
            <person name="Miller N."/>
            <person name="Minx P."/>
            <person name="Fulton R."/>
            <person name="Johnson D."/>
            <person name="Bemis G."/>
            <person name="Bentley D."/>
            <person name="Bradshaw H."/>
            <person name="Bourne S."/>
            <person name="Cordes M."/>
            <person name="Du Z."/>
            <person name="Fulton L."/>
            <person name="Goela D."/>
            <person name="Graves T."/>
            <person name="Hawkins J."/>
            <person name="Hinds K."/>
            <person name="Kemp K."/>
            <person name="Latreille P."/>
            <person name="Layman D."/>
            <person name="Ozersky P."/>
            <person name="Rohlfing T."/>
            <person name="Scheet P."/>
            <person name="Walker C."/>
            <person name="Wamsley A."/>
            <person name="Wohldmann P."/>
            <person name="Pepin K."/>
            <person name="Nelson J."/>
            <person name="Korf I."/>
            <person name="Bedell J.A."/>
            <person name="Hillier L.W."/>
            <person name="Mardis E."/>
            <person name="Waterston R."/>
            <person name="Wilson R."/>
            <person name="Emanuel B.S."/>
            <person name="Shaikh T."/>
            <person name="Kurahashi H."/>
            <person name="Saitta S."/>
            <person name="Budarf M.L."/>
            <person name="McDermid H.E."/>
            <person name="Johnson A."/>
            <person name="Wong A.C.C."/>
            <person name="Morrow B.E."/>
            <person name="Edelmann L."/>
            <person name="Kim U.J."/>
            <person name="Shizuya H."/>
            <person name="Simon M.I."/>
            <person name="Dumanski J.P."/>
            <person name="Peyrard M."/>
            <person name="Kedra D."/>
            <person name="Seroussi E."/>
            <person name="Fransson I."/>
            <person name="Tapia I."/>
            <person name="Bruder C.E."/>
            <person name="O'Brien K.P."/>
            <person name="Wilkinson P."/>
            <person name="Bodenteich A."/>
            <person name="Hartman K."/>
            <person name="Hu X."/>
            <person name="Khan A.S."/>
            <person name="Lane L."/>
            <person name="Tilahun Y."/>
            <person name="Wright H."/>
        </authorList>
    </citation>
    <scope>NUCLEOTIDE SEQUENCE [LARGE SCALE GENOMIC DNA]</scope>
</reference>
<reference key="6">
    <citation type="submission" date="2005-07" db="EMBL/GenBank/DDBJ databases">
        <authorList>
            <person name="Mural R.J."/>
            <person name="Istrail S."/>
            <person name="Sutton G.G."/>
            <person name="Florea L."/>
            <person name="Halpern A.L."/>
            <person name="Mobarry C.M."/>
            <person name="Lippert R."/>
            <person name="Walenz B."/>
            <person name="Shatkay H."/>
            <person name="Dew I."/>
            <person name="Miller J.R."/>
            <person name="Flanigan M.J."/>
            <person name="Edwards N.J."/>
            <person name="Bolanos R."/>
            <person name="Fasulo D."/>
            <person name="Halldorsson B.V."/>
            <person name="Hannenhalli S."/>
            <person name="Turner R."/>
            <person name="Yooseph S."/>
            <person name="Lu F."/>
            <person name="Nusskern D.R."/>
            <person name="Shue B.C."/>
            <person name="Zheng X.H."/>
            <person name="Zhong F."/>
            <person name="Delcher A.L."/>
            <person name="Huson D.H."/>
            <person name="Kravitz S.A."/>
            <person name="Mouchard L."/>
            <person name="Reinert K."/>
            <person name="Remington K.A."/>
            <person name="Clark A.G."/>
            <person name="Waterman M.S."/>
            <person name="Eichler E.E."/>
            <person name="Adams M.D."/>
            <person name="Hunkapiller M.W."/>
            <person name="Myers E.W."/>
            <person name="Venter J.C."/>
        </authorList>
    </citation>
    <scope>NUCLEOTIDE SEQUENCE [LARGE SCALE GENOMIC DNA]</scope>
</reference>
<reference key="7">
    <citation type="journal article" date="2004" name="Genome Res.">
        <title>The status, quality, and expansion of the NIH full-length cDNA project: the Mammalian Gene Collection (MGC).</title>
        <authorList>
            <consortium name="The MGC Project Team"/>
        </authorList>
    </citation>
    <scope>NUCLEOTIDE SEQUENCE [LARGE SCALE MRNA] (ISOFORMS 3 AND 4)</scope>
    <source>
        <tissue>Lung</tissue>
        <tissue>Placenta</tissue>
    </source>
</reference>
<reference key="8">
    <citation type="journal article" date="2005" name="J. Biol. Chem.">
        <title>Mutations in MTO2 related to tRNA modification impair mitochondrial gene expression and protein synthesis in the presence of a paromomycin resistance mutation in mitochondrial 15 S rRNA.</title>
        <authorList>
            <person name="Yan Q."/>
            <person name="Li X."/>
            <person name="Faye G."/>
            <person name="Guan M.-X."/>
        </authorList>
    </citation>
    <scope>FUNCTION</scope>
    <scope>SUBCELLULAR LOCATION</scope>
</reference>
<reference key="9">
    <citation type="journal article" date="2008" name="Proc. Natl. Acad. Sci. U.S.A.">
        <title>A quantitative atlas of mitotic phosphorylation.</title>
        <authorList>
            <person name="Dephoure N."/>
            <person name="Zhou C."/>
            <person name="Villen J."/>
            <person name="Beausoleil S.A."/>
            <person name="Bakalarski C.E."/>
            <person name="Elledge S.J."/>
            <person name="Gygi S.P."/>
        </authorList>
    </citation>
    <scope>IDENTIFICATION BY MASS SPECTROMETRY [LARGE SCALE ANALYSIS]</scope>
    <source>
        <tissue>Cervix carcinoma</tissue>
    </source>
</reference>
<reference key="10">
    <citation type="journal article" date="2006" name="Am. J. Hum. Genet.">
        <title>Mutation in TRMU related to transfer RNA modification modulates the phenotypic expression of the deafness-associated mitochondrial 12S ribosomal RNA mutations.</title>
        <authorList>
            <person name="Guan M.-X."/>
            <person name="Yan Q."/>
            <person name="Li X."/>
            <person name="Bykhovskaya Y."/>
            <person name="Gallo-Teran J."/>
            <person name="Hajek P."/>
            <person name="Umeda N."/>
            <person name="Zhao H."/>
            <person name="Garrido G."/>
            <person name="Mengesha E."/>
            <person name="Suzuki T."/>
            <person name="del Castillo I."/>
            <person name="Peters J.L."/>
            <person name="Li R."/>
            <person name="Qian Y."/>
            <person name="Wang X."/>
            <person name="Ballana E."/>
            <person name="Shohat M."/>
            <person name="Lu J."/>
            <person name="Estivill X."/>
            <person name="Watanabe K."/>
            <person name="Fischel-Ghodsian N."/>
        </authorList>
    </citation>
    <scope>INVOLVEMENT IN DFNI</scope>
    <scope>VARIANT SER-10</scope>
    <scope>CHARACTERIZATION OF VARIANT SER-10</scope>
    <scope>FUNCTION</scope>
    <scope>SUBCELLULAR LOCATION</scope>
</reference>
<reference key="11">
    <citation type="journal article" date="2009" name="Am. J. Hum. Genet.">
        <title>Acute infantile liver failure due to mutations in the TRMU gene.</title>
        <authorList>
            <person name="Zeharia A."/>
            <person name="Shaag A."/>
            <person name="Pappo O."/>
            <person name="Mager-Heckel A.-M."/>
            <person name="Saada A."/>
            <person name="Beinat M."/>
            <person name="Karicheva O."/>
            <person name="Mandel H."/>
            <person name="Ofek N."/>
            <person name="Segel R."/>
            <person name="Marom D."/>
            <person name="Roetig A."/>
            <person name="Tarassov I."/>
            <person name="Elpeleg O."/>
        </authorList>
    </citation>
    <scope>VARIANTS LFIT HIS-77 AND ASP-272</scope>
    <scope>VARIANTS SER-10; SER-14 AND MET-279</scope>
</reference>
<reference key="12">
    <citation type="journal article" date="2010" name="Am. J. Hum. Genet.">
        <authorList>
            <person name="Zeharia A."/>
            <person name="Shaag A."/>
            <person name="Pappo O."/>
            <person name="Mager-Heckel A.-M."/>
            <person name="Saada A."/>
            <person name="Beinat M."/>
            <person name="Karicheva O."/>
            <person name="Mandel H."/>
            <person name="Ofek N."/>
            <person name="Segel R."/>
            <person name="Marom D."/>
            <person name="Roetig A."/>
            <person name="Tarassov I."/>
            <person name="Elpeleg O."/>
        </authorList>
    </citation>
    <scope>ERRATUM OF PUBMED:19732863</scope>
</reference>
<reference key="13">
    <citation type="journal article" date="2017" name="J. Biol. Chem.">
        <title>Biochemical evidence for a nuclear modifier allele (A10S) in TRMU (Methylaminomethyl-2-thiouridylate-methyltransferase) related to mitochondrial tRNA modification in the phenotypic manifestation of deafness-associated 12S rRNA mutation.</title>
        <authorList>
            <person name="Meng F."/>
            <person name="Cang X."/>
            <person name="Peng Y."/>
            <person name="Li R."/>
            <person name="Zhang Z."/>
            <person name="Li F."/>
            <person name="Fan Q."/>
            <person name="Guan A.S."/>
            <person name="Fischel-Ghosian N."/>
            <person name="Zhao X."/>
            <person name="Guan M.X."/>
        </authorList>
    </citation>
    <scope>CHARACTERIZATION OF VARIANT SER-10</scope>
</reference>
<comment type="function">
    <text evidence="4 5 7">Catalyzes the 2-thiolation of uridine at the wobble position (U34) of mitochondrial tRNA(Lys), tRNA(Glu) and tRNA(Gln). Required for the formation of 5-taurinomethyl-2-thiouridine (tm5s2U) of mitochondrial tRNA(Lys), tRNA(Glu), and tRNA(Gln) at the wobble position. ATP is required to activate the C2 atom of the wobble base.</text>
</comment>
<comment type="catalytic activity">
    <reaction evidence="2">
        <text>5-taurinomethyluridine(34) in tRNA + S-sulfanyl-L-cysteinyl-[protein] + AH2 + ATP = 5-taurinomethyl-2-thiouridine(34) in tRNA + L-cysteinyl-[protein] + A + AMP + diphosphate + H(+)</text>
        <dbReference type="Rhea" id="RHEA:47040"/>
        <dbReference type="Rhea" id="RHEA-COMP:10131"/>
        <dbReference type="Rhea" id="RHEA-COMP:11726"/>
        <dbReference type="Rhea" id="RHEA-COMP:11732"/>
        <dbReference type="Rhea" id="RHEA-COMP:11733"/>
        <dbReference type="ChEBI" id="CHEBI:13193"/>
        <dbReference type="ChEBI" id="CHEBI:15378"/>
        <dbReference type="ChEBI" id="CHEBI:17499"/>
        <dbReference type="ChEBI" id="CHEBI:29950"/>
        <dbReference type="ChEBI" id="CHEBI:30616"/>
        <dbReference type="ChEBI" id="CHEBI:33019"/>
        <dbReference type="ChEBI" id="CHEBI:61963"/>
        <dbReference type="ChEBI" id="CHEBI:87171"/>
        <dbReference type="ChEBI" id="CHEBI:87172"/>
        <dbReference type="ChEBI" id="CHEBI:456215"/>
        <dbReference type="EC" id="2.8.1.14"/>
    </reaction>
</comment>
<comment type="interaction">
    <interactant intactId="EBI-2876757">
        <id>O75648</id>
    </interactant>
    <interactant intactId="EBI-5325353">
        <id>P11226</id>
        <label>MBL2</label>
    </interactant>
    <organismsDiffer>false</organismsDiffer>
    <experiments>3</experiments>
</comment>
<comment type="subcellular location">
    <subcellularLocation>
        <location evidence="4 5 6 7">Mitochondrion</location>
    </subcellularLocation>
</comment>
<comment type="alternative products">
    <event type="alternative splicing"/>
    <isoform>
        <id>O75648-1</id>
        <name>1</name>
        <sequence type="displayed"/>
    </isoform>
    <isoform>
        <id>O75648-2</id>
        <name>2</name>
        <sequence type="described" ref="VSP_035395"/>
    </isoform>
    <isoform>
        <id>O75648-3</id>
        <name>3</name>
        <sequence type="described" ref="VSP_035391 VSP_035392 VSP_035395"/>
    </isoform>
    <isoform>
        <id>O75648-4</id>
        <name>4</name>
        <sequence type="described" ref="VSP_035391 VSP_035392"/>
    </isoform>
    <isoform>
        <id>O75648-5</id>
        <name>5</name>
        <sequence type="described" ref="VSP_035393 VSP_035394"/>
    </isoform>
</comment>
<comment type="tissue specificity">
    <text evidence="6">Ubiquitous. Abundantly expressed in tissues with high metabolic rates including heart, liver, kidney, and brain.</text>
</comment>
<comment type="disease" evidence="7">
    <disease id="DI-05233">
        <name>Deafness, aminoglycoside-induced</name>
        <acronym>DFNI</acronym>
        <description>A form of sensorineural deafness characterized by moderate-to-profound hearing loss and mitochondrial inheritance. It is induced by exposure to aminoglycosides.</description>
        <dbReference type="MIM" id="580000"/>
    </disease>
    <text evidence="7">The gene represented in this entry acts as a disease modifier. DFNI is caused by mutations in mitochondrial rRNA genes, including homoplasmic A1555G and C1494T mutations in the highly conserved decoding site of the mitochondrial 12S rRNA. Mutated TRMU modulates the phenotypic manifestation of these mutations.</text>
</comment>
<comment type="disease" evidence="8">
    <disease id="DI-02634">
        <name>Liver failure, infantile, transient</name>
        <acronym>LFIT</acronym>
        <description>A transient disorder of hepatic function characterized by elevated liver enzymes, jaundice, vomiting, coagulopathy, hyperbilirubinemia, increased serum lactate. Patients who survive the initial acute episode can recover, show normal development and have no recurrence.</description>
        <dbReference type="MIM" id="613070"/>
    </disease>
    <text>The disease is caused by variants affecting the gene represented in this entry.</text>
</comment>
<comment type="miscellaneous">
    <text evidence="1">During the reaction, ATP is used to activate the C2 atom of U34 by adenylation. After this, the persulfide sulfur on the catalytic cysteine is transferred to the C2 atom of the wobble base (U34) of mitochondrial tRNA(Lys), tRNA(Glu) and tRNA(Gln). The reaction probably involves hydrogen sulfide that is generated from the persulfide intermediate and that acts as a nucleophile towards the activated C2 atom on U34. Subsequently, a transient disulfide bond is formed between the two active site cysteine residues (By similarity).</text>
</comment>
<comment type="similarity">
    <text evidence="13">Belongs to the MnmA/TRMU family.</text>
</comment>
<comment type="caution">
    <text evidence="14">Was originally thought to be a 5-methylaminomethyl-2-methyltransferase involved in tRNA modification.</text>
</comment>
<protein>
    <recommendedName>
        <fullName>Mitochondrial tRNA-specific 2-thiouridylase 1</fullName>
        <ecNumber evidence="2">2.8.1.14</ecNumber>
    </recommendedName>
    <alternativeName>
        <fullName>MTO2 homolog</fullName>
    </alternativeName>
</protein>
<evidence type="ECO:0000250" key="1"/>
<evidence type="ECO:0000250" key="2">
    <source>
        <dbReference type="UniProtKB" id="Q12093"/>
    </source>
</evidence>
<evidence type="ECO:0000256" key="3">
    <source>
        <dbReference type="SAM" id="MobiDB-lite"/>
    </source>
</evidence>
<evidence type="ECO:0000269" key="4">
    <source>
    </source>
</evidence>
<evidence type="ECO:0000269" key="5">
    <source>
    </source>
</evidence>
<evidence type="ECO:0000269" key="6">
    <source>
    </source>
</evidence>
<evidence type="ECO:0000269" key="7">
    <source>
    </source>
</evidence>
<evidence type="ECO:0000269" key="8">
    <source>
    </source>
</evidence>
<evidence type="ECO:0000269" key="9">
    <source>
    </source>
</evidence>
<evidence type="ECO:0000303" key="10">
    <source>
    </source>
</evidence>
<evidence type="ECO:0000303" key="11">
    <source>
    </source>
</evidence>
<evidence type="ECO:0000303" key="12">
    <source>
    </source>
</evidence>
<evidence type="ECO:0000305" key="13"/>
<evidence type="ECO:0000305" key="14">
    <source>
    </source>
</evidence>
<keyword id="KW-0025">Alternative splicing</keyword>
<keyword id="KW-0067">ATP-binding</keyword>
<keyword id="KW-0209">Deafness</keyword>
<keyword id="KW-0225">Disease variant</keyword>
<keyword id="KW-1015">Disulfide bond</keyword>
<keyword id="KW-0496">Mitochondrion</keyword>
<keyword id="KW-1010">Non-syndromic deafness</keyword>
<keyword id="KW-0547">Nucleotide-binding</keyword>
<keyword id="KW-1267">Proteomics identification</keyword>
<keyword id="KW-1185">Reference proteome</keyword>
<keyword id="KW-0694">RNA-binding</keyword>
<keyword id="KW-0808">Transferase</keyword>
<keyword id="KW-0819">tRNA processing</keyword>
<keyword id="KW-0820">tRNA-binding</keyword>
<proteinExistence type="evidence at protein level"/>